<dbReference type="EC" id="6.3.2.-" evidence="1"/>
<dbReference type="EMBL" id="CP001144">
    <property type="protein sequence ID" value="ACH74160.1"/>
    <property type="molecule type" value="Genomic_DNA"/>
</dbReference>
<dbReference type="RefSeq" id="WP_000004793.1">
    <property type="nucleotide sequence ID" value="NC_011205.1"/>
</dbReference>
<dbReference type="SMR" id="B5FRL4"/>
<dbReference type="KEGG" id="sed:SeD_A4741"/>
<dbReference type="HOGENOM" id="CLU_008255_1_1_6"/>
<dbReference type="Proteomes" id="UP000008322">
    <property type="component" value="Chromosome"/>
</dbReference>
<dbReference type="GO" id="GO:0005829">
    <property type="term" value="C:cytosol"/>
    <property type="evidence" value="ECO:0007669"/>
    <property type="project" value="TreeGrafter"/>
</dbReference>
<dbReference type="GO" id="GO:0016880">
    <property type="term" value="F:acid-ammonia (or amide) ligase activity"/>
    <property type="evidence" value="ECO:0007669"/>
    <property type="project" value="UniProtKB-UniRule"/>
</dbReference>
<dbReference type="GO" id="GO:0005524">
    <property type="term" value="F:ATP binding"/>
    <property type="evidence" value="ECO:0007669"/>
    <property type="project" value="UniProtKB-UniRule"/>
</dbReference>
<dbReference type="GO" id="GO:0004824">
    <property type="term" value="F:lysine-tRNA ligase activity"/>
    <property type="evidence" value="ECO:0007669"/>
    <property type="project" value="InterPro"/>
</dbReference>
<dbReference type="GO" id="GO:0000049">
    <property type="term" value="F:tRNA binding"/>
    <property type="evidence" value="ECO:0007669"/>
    <property type="project" value="TreeGrafter"/>
</dbReference>
<dbReference type="GO" id="GO:0006430">
    <property type="term" value="P:lysyl-tRNA aminoacylation"/>
    <property type="evidence" value="ECO:0007669"/>
    <property type="project" value="InterPro"/>
</dbReference>
<dbReference type="FunFam" id="3.30.930.10:FF:000017">
    <property type="entry name" value="Elongation factor P--(R)-beta-lysine ligase"/>
    <property type="match status" value="1"/>
</dbReference>
<dbReference type="Gene3D" id="3.30.930.10">
    <property type="entry name" value="Bira Bifunctional Protein, Domain 2"/>
    <property type="match status" value="1"/>
</dbReference>
<dbReference type="HAMAP" id="MF_00174">
    <property type="entry name" value="EF_P_modif_A"/>
    <property type="match status" value="1"/>
</dbReference>
<dbReference type="InterPro" id="IPR004364">
    <property type="entry name" value="Aa-tRNA-synt_II"/>
</dbReference>
<dbReference type="InterPro" id="IPR006195">
    <property type="entry name" value="aa-tRNA-synth_II"/>
</dbReference>
<dbReference type="InterPro" id="IPR045864">
    <property type="entry name" value="aa-tRNA-synth_II/BPL/LPL"/>
</dbReference>
<dbReference type="InterPro" id="IPR004525">
    <property type="entry name" value="EpmA"/>
</dbReference>
<dbReference type="InterPro" id="IPR018149">
    <property type="entry name" value="Lys-tRNA-synth_II_C"/>
</dbReference>
<dbReference type="NCBIfam" id="TIGR00462">
    <property type="entry name" value="genX"/>
    <property type="match status" value="1"/>
</dbReference>
<dbReference type="NCBIfam" id="NF006828">
    <property type="entry name" value="PRK09350.1"/>
    <property type="match status" value="1"/>
</dbReference>
<dbReference type="PANTHER" id="PTHR42918:SF6">
    <property type="entry name" value="ELONGATION FACTOR P--(R)-BETA-LYSINE LIGASE"/>
    <property type="match status" value="1"/>
</dbReference>
<dbReference type="PANTHER" id="PTHR42918">
    <property type="entry name" value="LYSYL-TRNA SYNTHETASE"/>
    <property type="match status" value="1"/>
</dbReference>
<dbReference type="Pfam" id="PF00152">
    <property type="entry name" value="tRNA-synt_2"/>
    <property type="match status" value="1"/>
</dbReference>
<dbReference type="PRINTS" id="PR00982">
    <property type="entry name" value="TRNASYNTHLYS"/>
</dbReference>
<dbReference type="SUPFAM" id="SSF55681">
    <property type="entry name" value="Class II aaRS and biotin synthetases"/>
    <property type="match status" value="1"/>
</dbReference>
<dbReference type="PROSITE" id="PS50862">
    <property type="entry name" value="AA_TRNA_LIGASE_II"/>
    <property type="match status" value="1"/>
</dbReference>
<name>EPMA_SALDC</name>
<organism>
    <name type="scientific">Salmonella dublin (strain CT_02021853)</name>
    <dbReference type="NCBI Taxonomy" id="439851"/>
    <lineage>
        <taxon>Bacteria</taxon>
        <taxon>Pseudomonadati</taxon>
        <taxon>Pseudomonadota</taxon>
        <taxon>Gammaproteobacteria</taxon>
        <taxon>Enterobacterales</taxon>
        <taxon>Enterobacteriaceae</taxon>
        <taxon>Salmonella</taxon>
    </lineage>
</organism>
<sequence length="325" mass="36870">MSETATWQPSASIPNLLKRAAIMAEIRRFFADRGVLEVETPCMSQATVTDIHLFPFETRFVGPGHSQGINLYLMTSPEYHMKRLLAAGCGPVFQLCRSFRNEEMGRHHNPEFTMLEWYRPHYDMYRLMNEVDDLLQQVLDCQPAESLSYQQAFQRHLEIDPLSADKTQLREAAAKLDLSNIADTEEDRDTLLQLLFTMGVEPHIGKEKPTFIYHFPASQASLAQISTEDHRVAERFEVYYKGIELANGFHELTDAREQQQRFEQDNRKRAARGLPQQPIDQNLLDALAAGLPDCSGVALGIDRLVMLALGAESLADVIAFTVDRA</sequence>
<reference key="1">
    <citation type="journal article" date="2011" name="J. Bacteriol.">
        <title>Comparative genomics of 28 Salmonella enterica isolates: evidence for CRISPR-mediated adaptive sublineage evolution.</title>
        <authorList>
            <person name="Fricke W.F."/>
            <person name="Mammel M.K."/>
            <person name="McDermott P.F."/>
            <person name="Tartera C."/>
            <person name="White D.G."/>
            <person name="Leclerc J.E."/>
            <person name="Ravel J."/>
            <person name="Cebula T.A."/>
        </authorList>
    </citation>
    <scope>NUCLEOTIDE SEQUENCE [LARGE SCALE GENOMIC DNA]</scope>
    <source>
        <strain>CT_02021853</strain>
    </source>
</reference>
<accession>B5FRL4</accession>
<protein>
    <recommendedName>
        <fullName evidence="1">Elongation factor P--(R)-beta-lysine ligase</fullName>
        <shortName evidence="1">EF-P--(R)-beta-lysine ligase</shortName>
        <ecNumber evidence="1">6.3.2.-</ecNumber>
    </recommendedName>
    <alternativeName>
        <fullName evidence="1">EF-P post-translational modification enzyme A</fullName>
    </alternativeName>
    <alternativeName>
        <fullName evidence="1">EF-P-lysine lysyltransferase</fullName>
    </alternativeName>
</protein>
<keyword id="KW-0067">ATP-binding</keyword>
<keyword id="KW-0436">Ligase</keyword>
<keyword id="KW-0547">Nucleotide-binding</keyword>
<comment type="function">
    <text evidence="1">With EpmB is involved in the beta-lysylation step of the post-translational modification of translation elongation factor P (EF-P) on 'Lys-34'. Catalyzes the ATP-dependent activation of (R)-beta-lysine produced by EpmB, forming a lysyl-adenylate, from which the beta-lysyl moiety is then transferred to the epsilon-amino group of EF-P 'Lys-34'.</text>
</comment>
<comment type="catalytic activity">
    <reaction evidence="1">
        <text>D-beta-lysine + L-lysyl-[protein] + ATP = N(6)-((3R)-3,6-diaminohexanoyl)-L-lysyl-[protein] + AMP + diphosphate + H(+)</text>
        <dbReference type="Rhea" id="RHEA:83435"/>
        <dbReference type="Rhea" id="RHEA-COMP:9752"/>
        <dbReference type="Rhea" id="RHEA-COMP:20131"/>
        <dbReference type="ChEBI" id="CHEBI:15378"/>
        <dbReference type="ChEBI" id="CHEBI:29969"/>
        <dbReference type="ChEBI" id="CHEBI:30616"/>
        <dbReference type="ChEBI" id="CHEBI:33019"/>
        <dbReference type="ChEBI" id="CHEBI:84138"/>
        <dbReference type="ChEBI" id="CHEBI:156053"/>
        <dbReference type="ChEBI" id="CHEBI:456215"/>
    </reaction>
    <physiologicalReaction direction="left-to-right" evidence="1">
        <dbReference type="Rhea" id="RHEA:83436"/>
    </physiologicalReaction>
</comment>
<comment type="subunit">
    <text evidence="1">Homodimer.</text>
</comment>
<comment type="similarity">
    <text evidence="1">Belongs to the class-II aminoacyl-tRNA synthetase family. EpmA subfamily.</text>
</comment>
<feature type="chain" id="PRO_1000097905" description="Elongation factor P--(R)-beta-lysine ligase">
    <location>
        <begin position="1"/>
        <end position="325"/>
    </location>
</feature>
<feature type="binding site" evidence="1">
    <location>
        <begin position="76"/>
        <end position="78"/>
    </location>
    <ligand>
        <name>substrate</name>
    </ligand>
</feature>
<feature type="binding site" evidence="1">
    <location>
        <begin position="100"/>
        <end position="102"/>
    </location>
    <ligand>
        <name>ATP</name>
        <dbReference type="ChEBI" id="CHEBI:30616"/>
    </ligand>
</feature>
<feature type="binding site" evidence="1">
    <location>
        <position position="109"/>
    </location>
    <ligand>
        <name>ATP</name>
        <dbReference type="ChEBI" id="CHEBI:30616"/>
    </ligand>
</feature>
<feature type="binding site" evidence="1">
    <location>
        <position position="118"/>
    </location>
    <ligand>
        <name>substrate</name>
    </ligand>
</feature>
<feature type="binding site" evidence="1">
    <location>
        <begin position="244"/>
        <end position="245"/>
    </location>
    <ligand>
        <name>ATP</name>
        <dbReference type="ChEBI" id="CHEBI:30616"/>
    </ligand>
</feature>
<feature type="binding site" evidence="1">
    <location>
        <position position="251"/>
    </location>
    <ligand>
        <name>substrate</name>
    </ligand>
</feature>
<feature type="binding site" evidence="1">
    <location>
        <position position="300"/>
    </location>
    <ligand>
        <name>ATP</name>
        <dbReference type="ChEBI" id="CHEBI:30616"/>
    </ligand>
</feature>
<proteinExistence type="inferred from homology"/>
<evidence type="ECO:0000255" key="1">
    <source>
        <dbReference type="HAMAP-Rule" id="MF_00174"/>
    </source>
</evidence>
<gene>
    <name evidence="1" type="primary">epmA</name>
    <name type="synonym">yjeA</name>
    <name type="ordered locus">SeD_A4741</name>
</gene>